<feature type="chain" id="PRO_1000073638" description="Purine nucleoside phosphorylase DeoD-type">
    <location>
        <begin position="1"/>
        <end position="238"/>
    </location>
</feature>
<feature type="active site" description="Proton donor" evidence="2">
    <location>
        <position position="204"/>
    </location>
</feature>
<feature type="binding site" evidence="1">
    <location>
        <position position="4"/>
    </location>
    <ligand>
        <name>a purine D-ribonucleoside</name>
        <dbReference type="ChEBI" id="CHEBI:142355"/>
        <note>ligand shared between dimeric partners</note>
    </ligand>
</feature>
<feature type="binding site" description="in other chain" evidence="1">
    <location>
        <position position="20"/>
    </location>
    <ligand>
        <name>phosphate</name>
        <dbReference type="ChEBI" id="CHEBI:43474"/>
        <note>ligand shared between dimeric partners</note>
    </ligand>
</feature>
<feature type="binding site" description="in other chain" evidence="1">
    <location>
        <position position="24"/>
    </location>
    <ligand>
        <name>phosphate</name>
        <dbReference type="ChEBI" id="CHEBI:43474"/>
        <note>ligand shared between dimeric partners</note>
    </ligand>
</feature>
<feature type="binding site" evidence="1">
    <location>
        <position position="43"/>
    </location>
    <ligand>
        <name>phosphate</name>
        <dbReference type="ChEBI" id="CHEBI:43474"/>
        <note>ligand shared between dimeric partners</note>
    </ligand>
</feature>
<feature type="binding site" description="in other chain" evidence="1">
    <location>
        <begin position="87"/>
        <end position="90"/>
    </location>
    <ligand>
        <name>phosphate</name>
        <dbReference type="ChEBI" id="CHEBI:43474"/>
        <note>ligand shared between dimeric partners</note>
    </ligand>
</feature>
<feature type="binding site" description="in other chain" evidence="1">
    <location>
        <begin position="179"/>
        <end position="181"/>
    </location>
    <ligand>
        <name>a purine D-ribonucleoside</name>
        <dbReference type="ChEBI" id="CHEBI:142355"/>
        <note>ligand shared between dimeric partners</note>
    </ligand>
</feature>
<feature type="binding site" description="in other chain" evidence="1">
    <location>
        <begin position="203"/>
        <end position="204"/>
    </location>
    <ligand>
        <name>a purine D-ribonucleoside</name>
        <dbReference type="ChEBI" id="CHEBI:142355"/>
        <note>ligand shared between dimeric partners</note>
    </ligand>
</feature>
<feature type="site" description="Important for catalytic activity" evidence="2">
    <location>
        <position position="217"/>
    </location>
</feature>
<evidence type="ECO:0000250" key="1">
    <source>
        <dbReference type="UniProtKB" id="P50389"/>
    </source>
</evidence>
<evidence type="ECO:0000255" key="2">
    <source>
        <dbReference type="HAMAP-Rule" id="MF_01627"/>
    </source>
</evidence>
<name>DEOD_ACTSZ</name>
<gene>
    <name evidence="2" type="primary">deoD</name>
    <name type="ordered locus">Asuc_0624</name>
</gene>
<organism>
    <name type="scientific">Actinobacillus succinogenes (strain ATCC 55618 / DSM 22257 / CCUG 43843 / 130Z)</name>
    <dbReference type="NCBI Taxonomy" id="339671"/>
    <lineage>
        <taxon>Bacteria</taxon>
        <taxon>Pseudomonadati</taxon>
        <taxon>Pseudomonadota</taxon>
        <taxon>Gammaproteobacteria</taxon>
        <taxon>Pasteurellales</taxon>
        <taxon>Pasteurellaceae</taxon>
        <taxon>Actinobacillus</taxon>
    </lineage>
</organism>
<comment type="function">
    <text evidence="2">Catalyzes the reversible phosphorolytic breakdown of the N-glycosidic bond in the beta-(deoxy)ribonucleoside molecules, with the formation of the corresponding free purine bases and pentose-1-phosphate.</text>
</comment>
<comment type="catalytic activity">
    <reaction evidence="2">
        <text>a purine D-ribonucleoside + phosphate = a purine nucleobase + alpha-D-ribose 1-phosphate</text>
        <dbReference type="Rhea" id="RHEA:19805"/>
        <dbReference type="ChEBI" id="CHEBI:26386"/>
        <dbReference type="ChEBI" id="CHEBI:43474"/>
        <dbReference type="ChEBI" id="CHEBI:57720"/>
        <dbReference type="ChEBI" id="CHEBI:142355"/>
        <dbReference type="EC" id="2.4.2.1"/>
    </reaction>
</comment>
<comment type="catalytic activity">
    <reaction evidence="2">
        <text>a purine 2'-deoxy-D-ribonucleoside + phosphate = a purine nucleobase + 2-deoxy-alpha-D-ribose 1-phosphate</text>
        <dbReference type="Rhea" id="RHEA:36431"/>
        <dbReference type="ChEBI" id="CHEBI:26386"/>
        <dbReference type="ChEBI" id="CHEBI:43474"/>
        <dbReference type="ChEBI" id="CHEBI:57259"/>
        <dbReference type="ChEBI" id="CHEBI:142361"/>
        <dbReference type="EC" id="2.4.2.1"/>
    </reaction>
</comment>
<comment type="subunit">
    <text evidence="2">Homohexamer; trimer of homodimers.</text>
</comment>
<comment type="similarity">
    <text evidence="2">Belongs to the PNP/UDP phosphorylase family.</text>
</comment>
<keyword id="KW-0328">Glycosyltransferase</keyword>
<keyword id="KW-1185">Reference proteome</keyword>
<keyword id="KW-0808">Transferase</keyword>
<accession>A6VM01</accession>
<sequence length="238" mass="25866">MTPHINAPAGAFADVVLMPGDPLRAKYIAETFLDQPELVTDVRNMLGYTGSYKGRRISVMGHGMGIPSCSIYSKELITEYGVKKIIRVGSCGAVRQDVHVRDVIIGLGACTDSKVNRIRFRDNDFAAIADFGMAQAAVQAAKNKKIKVHVGNLFSADLFYTPDVEMFDVMEKYGILGVEMEAAGIYGVAAEFGAKALSICTVSDHIRSGEQTSSEERQTTFNEMIEIALESVLLGDND</sequence>
<protein>
    <recommendedName>
        <fullName evidence="2">Purine nucleoside phosphorylase DeoD-type</fullName>
        <shortName evidence="2">PNP</shortName>
        <ecNumber evidence="2">2.4.2.1</ecNumber>
    </recommendedName>
</protein>
<proteinExistence type="inferred from homology"/>
<dbReference type="EC" id="2.4.2.1" evidence="2"/>
<dbReference type="EMBL" id="CP000746">
    <property type="protein sequence ID" value="ABR73998.1"/>
    <property type="molecule type" value="Genomic_DNA"/>
</dbReference>
<dbReference type="RefSeq" id="WP_012072378.1">
    <property type="nucleotide sequence ID" value="NC_009655.1"/>
</dbReference>
<dbReference type="SMR" id="A6VM01"/>
<dbReference type="STRING" id="339671.Asuc_0624"/>
<dbReference type="KEGG" id="asu:Asuc_0624"/>
<dbReference type="eggNOG" id="COG0813">
    <property type="taxonomic scope" value="Bacteria"/>
</dbReference>
<dbReference type="HOGENOM" id="CLU_068457_2_0_6"/>
<dbReference type="OrthoDB" id="9782889at2"/>
<dbReference type="Proteomes" id="UP000001114">
    <property type="component" value="Chromosome"/>
</dbReference>
<dbReference type="GO" id="GO:0005829">
    <property type="term" value="C:cytosol"/>
    <property type="evidence" value="ECO:0007669"/>
    <property type="project" value="TreeGrafter"/>
</dbReference>
<dbReference type="GO" id="GO:0004731">
    <property type="term" value="F:purine-nucleoside phosphorylase activity"/>
    <property type="evidence" value="ECO:0007669"/>
    <property type="project" value="UniProtKB-UniRule"/>
</dbReference>
<dbReference type="GO" id="GO:0006152">
    <property type="term" value="P:purine nucleoside catabolic process"/>
    <property type="evidence" value="ECO:0007669"/>
    <property type="project" value="TreeGrafter"/>
</dbReference>
<dbReference type="CDD" id="cd09006">
    <property type="entry name" value="PNP_EcPNPI-like"/>
    <property type="match status" value="1"/>
</dbReference>
<dbReference type="FunFam" id="3.40.50.1580:FF:000002">
    <property type="entry name" value="Purine nucleoside phosphorylase DeoD-type"/>
    <property type="match status" value="1"/>
</dbReference>
<dbReference type="Gene3D" id="3.40.50.1580">
    <property type="entry name" value="Nucleoside phosphorylase domain"/>
    <property type="match status" value="1"/>
</dbReference>
<dbReference type="HAMAP" id="MF_01627">
    <property type="entry name" value="Pur_nucleosid_phosp"/>
    <property type="match status" value="1"/>
</dbReference>
<dbReference type="InterPro" id="IPR004402">
    <property type="entry name" value="DeoD-type"/>
</dbReference>
<dbReference type="InterPro" id="IPR018016">
    <property type="entry name" value="Nucleoside_phosphorylase_CS"/>
</dbReference>
<dbReference type="InterPro" id="IPR000845">
    <property type="entry name" value="Nucleoside_phosphorylase_d"/>
</dbReference>
<dbReference type="InterPro" id="IPR035994">
    <property type="entry name" value="Nucleoside_phosphorylase_sf"/>
</dbReference>
<dbReference type="NCBIfam" id="TIGR00107">
    <property type="entry name" value="deoD"/>
    <property type="match status" value="1"/>
</dbReference>
<dbReference type="NCBIfam" id="NF004489">
    <property type="entry name" value="PRK05819.1"/>
    <property type="match status" value="1"/>
</dbReference>
<dbReference type="NCBIfam" id="NF009914">
    <property type="entry name" value="PRK13374.1"/>
    <property type="match status" value="1"/>
</dbReference>
<dbReference type="PANTHER" id="PTHR43691:SF2">
    <property type="entry name" value="PURINE NUCLEOSIDE PHOSPHORYLASE DEOD-TYPE"/>
    <property type="match status" value="1"/>
</dbReference>
<dbReference type="PANTHER" id="PTHR43691">
    <property type="entry name" value="URIDINE PHOSPHORYLASE"/>
    <property type="match status" value="1"/>
</dbReference>
<dbReference type="Pfam" id="PF01048">
    <property type="entry name" value="PNP_UDP_1"/>
    <property type="match status" value="1"/>
</dbReference>
<dbReference type="SUPFAM" id="SSF53167">
    <property type="entry name" value="Purine and uridine phosphorylases"/>
    <property type="match status" value="1"/>
</dbReference>
<dbReference type="PROSITE" id="PS01232">
    <property type="entry name" value="PNP_UDP_1"/>
    <property type="match status" value="1"/>
</dbReference>
<reference key="1">
    <citation type="journal article" date="2010" name="BMC Genomics">
        <title>A genomic perspective on the potential of Actinobacillus succinogenes for industrial succinate production.</title>
        <authorList>
            <person name="McKinlay J.B."/>
            <person name="Laivenieks M."/>
            <person name="Schindler B.D."/>
            <person name="McKinlay A.A."/>
            <person name="Siddaramappa S."/>
            <person name="Challacombe J.F."/>
            <person name="Lowry S.R."/>
            <person name="Clum A."/>
            <person name="Lapidus A.L."/>
            <person name="Burkhart K.B."/>
            <person name="Harkins V."/>
            <person name="Vieille C."/>
        </authorList>
    </citation>
    <scope>NUCLEOTIDE SEQUENCE [LARGE SCALE GENOMIC DNA]</scope>
    <source>
        <strain>ATCC 55618 / DSM 22257 / CCUG 43843 / 130Z</strain>
    </source>
</reference>